<gene>
    <name evidence="2" type="primary">rpsL</name>
    <name type="ordered locus">PSPA7_0832</name>
</gene>
<dbReference type="EMBL" id="CP000744">
    <property type="protein sequence ID" value="ABR86737.1"/>
    <property type="molecule type" value="Genomic_DNA"/>
</dbReference>
<dbReference type="RefSeq" id="WP_003093744.1">
    <property type="nucleotide sequence ID" value="NC_009656.1"/>
</dbReference>
<dbReference type="SMR" id="A6UZI3"/>
<dbReference type="GeneID" id="77219193"/>
<dbReference type="KEGG" id="pap:PSPA7_0832"/>
<dbReference type="HOGENOM" id="CLU_104295_1_2_6"/>
<dbReference type="Proteomes" id="UP000001582">
    <property type="component" value="Chromosome"/>
</dbReference>
<dbReference type="GO" id="GO:0015935">
    <property type="term" value="C:small ribosomal subunit"/>
    <property type="evidence" value="ECO:0007669"/>
    <property type="project" value="InterPro"/>
</dbReference>
<dbReference type="GO" id="GO:0019843">
    <property type="term" value="F:rRNA binding"/>
    <property type="evidence" value="ECO:0007669"/>
    <property type="project" value="UniProtKB-UniRule"/>
</dbReference>
<dbReference type="GO" id="GO:0003735">
    <property type="term" value="F:structural constituent of ribosome"/>
    <property type="evidence" value="ECO:0007669"/>
    <property type="project" value="InterPro"/>
</dbReference>
<dbReference type="GO" id="GO:0000049">
    <property type="term" value="F:tRNA binding"/>
    <property type="evidence" value="ECO:0007669"/>
    <property type="project" value="UniProtKB-UniRule"/>
</dbReference>
<dbReference type="GO" id="GO:0006412">
    <property type="term" value="P:translation"/>
    <property type="evidence" value="ECO:0007669"/>
    <property type="project" value="UniProtKB-UniRule"/>
</dbReference>
<dbReference type="CDD" id="cd03368">
    <property type="entry name" value="Ribosomal_S12"/>
    <property type="match status" value="1"/>
</dbReference>
<dbReference type="FunFam" id="2.40.50.140:FF:000001">
    <property type="entry name" value="30S ribosomal protein S12"/>
    <property type="match status" value="1"/>
</dbReference>
<dbReference type="Gene3D" id="2.40.50.140">
    <property type="entry name" value="Nucleic acid-binding proteins"/>
    <property type="match status" value="1"/>
</dbReference>
<dbReference type="HAMAP" id="MF_00403_B">
    <property type="entry name" value="Ribosomal_uS12_B"/>
    <property type="match status" value="1"/>
</dbReference>
<dbReference type="InterPro" id="IPR012340">
    <property type="entry name" value="NA-bd_OB-fold"/>
</dbReference>
<dbReference type="InterPro" id="IPR006032">
    <property type="entry name" value="Ribosomal_uS12"/>
</dbReference>
<dbReference type="InterPro" id="IPR005679">
    <property type="entry name" value="Ribosomal_uS12_bac"/>
</dbReference>
<dbReference type="NCBIfam" id="TIGR00981">
    <property type="entry name" value="rpsL_bact"/>
    <property type="match status" value="1"/>
</dbReference>
<dbReference type="PANTHER" id="PTHR11652">
    <property type="entry name" value="30S RIBOSOMAL PROTEIN S12 FAMILY MEMBER"/>
    <property type="match status" value="1"/>
</dbReference>
<dbReference type="Pfam" id="PF00164">
    <property type="entry name" value="Ribosom_S12_S23"/>
    <property type="match status" value="1"/>
</dbReference>
<dbReference type="PIRSF" id="PIRSF002133">
    <property type="entry name" value="Ribosomal_S12/S23"/>
    <property type="match status" value="1"/>
</dbReference>
<dbReference type="PRINTS" id="PR01034">
    <property type="entry name" value="RIBOSOMALS12"/>
</dbReference>
<dbReference type="SUPFAM" id="SSF50249">
    <property type="entry name" value="Nucleic acid-binding proteins"/>
    <property type="match status" value="1"/>
</dbReference>
<dbReference type="PROSITE" id="PS00055">
    <property type="entry name" value="RIBOSOMAL_S12"/>
    <property type="match status" value="1"/>
</dbReference>
<comment type="function">
    <text evidence="2">With S4 and S5 plays an important role in translational accuracy.</text>
</comment>
<comment type="function">
    <text evidence="2">Interacts with and stabilizes bases of the 16S rRNA that are involved in tRNA selection in the A site and with the mRNA backbone. Located at the interface of the 30S and 50S subunits, it traverses the body of the 30S subunit contacting proteins on the other side and probably holding the rRNA structure together. The combined cluster of proteins S8, S12 and S17 appears to hold together the shoulder and platform of the 30S subunit.</text>
</comment>
<comment type="subunit">
    <text evidence="2">Part of the 30S ribosomal subunit. Contacts proteins S8 and S17. May interact with IF1 in the 30S initiation complex.</text>
</comment>
<comment type="similarity">
    <text evidence="2">Belongs to the universal ribosomal protein uS12 family.</text>
</comment>
<reference key="1">
    <citation type="submission" date="2007-06" db="EMBL/GenBank/DDBJ databases">
        <authorList>
            <person name="Dodson R.J."/>
            <person name="Harkins D."/>
            <person name="Paulsen I.T."/>
        </authorList>
    </citation>
    <scope>NUCLEOTIDE SEQUENCE [LARGE SCALE GENOMIC DNA]</scope>
    <source>
        <strain>DSM 24068 / PA7</strain>
    </source>
</reference>
<organism>
    <name type="scientific">Pseudomonas paraeruginosa (strain DSM 24068 / PA7)</name>
    <name type="common">Pseudomonas aeruginosa (strain PA7)</name>
    <dbReference type="NCBI Taxonomy" id="381754"/>
    <lineage>
        <taxon>Bacteria</taxon>
        <taxon>Pseudomonadati</taxon>
        <taxon>Pseudomonadota</taxon>
        <taxon>Gammaproteobacteria</taxon>
        <taxon>Pseudomonadales</taxon>
        <taxon>Pseudomonadaceae</taxon>
        <taxon>Pseudomonas</taxon>
        <taxon>Pseudomonas paraeruginosa</taxon>
    </lineage>
</organism>
<evidence type="ECO:0000250" key="1"/>
<evidence type="ECO:0000255" key="2">
    <source>
        <dbReference type="HAMAP-Rule" id="MF_00403"/>
    </source>
</evidence>
<evidence type="ECO:0000256" key="3">
    <source>
        <dbReference type="SAM" id="MobiDB-lite"/>
    </source>
</evidence>
<evidence type="ECO:0000305" key="4"/>
<sequence>MATINQLVRKPRKRMVDKSDVPALQNCPQRRGVCTRVYTTTPKKPNSALRKVCRVRLTNGFEVSSYIGGEGHNLQEHSVVLIRGGRVKDLPGVRYHTVRGSLDTSGVKDRKQGRSKYGAKRPK</sequence>
<feature type="chain" id="PRO_1000049801" description="Small ribosomal subunit protein uS12">
    <location>
        <begin position="1"/>
        <end position="123"/>
    </location>
</feature>
<feature type="region of interest" description="Disordered" evidence="3">
    <location>
        <begin position="100"/>
        <end position="123"/>
    </location>
</feature>
<feature type="compositionally biased region" description="Basic residues" evidence="3">
    <location>
        <begin position="113"/>
        <end position="123"/>
    </location>
</feature>
<feature type="modified residue" description="3-methylthioaspartic acid" evidence="1">
    <location>
        <position position="89"/>
    </location>
</feature>
<proteinExistence type="inferred from homology"/>
<protein>
    <recommendedName>
        <fullName evidence="2">Small ribosomal subunit protein uS12</fullName>
    </recommendedName>
    <alternativeName>
        <fullName evidence="4">30S ribosomal protein S12</fullName>
    </alternativeName>
</protein>
<keyword id="KW-0488">Methylation</keyword>
<keyword id="KW-0687">Ribonucleoprotein</keyword>
<keyword id="KW-0689">Ribosomal protein</keyword>
<keyword id="KW-0694">RNA-binding</keyword>
<keyword id="KW-0699">rRNA-binding</keyword>
<keyword id="KW-0820">tRNA-binding</keyword>
<name>RS12_PSEP7</name>
<accession>A6UZI3</accession>